<comment type="function">
    <text evidence="1">Negative regulator of FtsZ ring formation; modulates the frequency and position of FtsZ ring formation. Inhibits FtsZ ring formation at polar sites. Interacts either with FtsZ or with one of its binding partners to promote depolymerization.</text>
</comment>
<comment type="subcellular location">
    <subcellularLocation>
        <location evidence="1">Cell membrane</location>
        <topology evidence="1">Single-pass membrane protein</topology>
    </subcellularLocation>
    <text evidence="1">Colocalized with FtsZ to the nascent septal site.</text>
</comment>
<comment type="similarity">
    <text evidence="1">Belongs to the EzrA family.</text>
</comment>
<name>EZRA_LISMH</name>
<proteinExistence type="inferred from homology"/>
<gene>
    <name evidence="1" type="primary">ezrA</name>
    <name type="ordered locus">LMHCC_0968</name>
</gene>
<accession>B8DHE7</accession>
<protein>
    <recommendedName>
        <fullName evidence="1">Septation ring formation regulator EzrA</fullName>
    </recommendedName>
</protein>
<feature type="chain" id="PRO_1000148070" description="Septation ring formation regulator EzrA">
    <location>
        <begin position="1"/>
        <end position="571"/>
    </location>
</feature>
<feature type="topological domain" description="Extracellular" evidence="1">
    <location>
        <begin position="1"/>
        <end position="3"/>
    </location>
</feature>
<feature type="transmembrane region" description="Helical" evidence="1">
    <location>
        <begin position="4"/>
        <end position="22"/>
    </location>
</feature>
<feature type="topological domain" description="Cytoplasmic" evidence="1">
    <location>
        <begin position="23"/>
        <end position="571"/>
    </location>
</feature>
<feature type="coiled-coil region" evidence="1">
    <location>
        <begin position="102"/>
        <end position="147"/>
    </location>
</feature>
<feature type="coiled-coil region" evidence="1">
    <location>
        <begin position="248"/>
        <end position="298"/>
    </location>
</feature>
<feature type="coiled-coil region" evidence="1">
    <location>
        <begin position="326"/>
        <end position="374"/>
    </location>
</feature>
<feature type="coiled-coil region" evidence="1">
    <location>
        <begin position="400"/>
        <end position="437"/>
    </location>
</feature>
<feature type="coiled-coil region" evidence="1">
    <location>
        <begin position="478"/>
        <end position="529"/>
    </location>
</feature>
<keyword id="KW-0131">Cell cycle</keyword>
<keyword id="KW-0132">Cell division</keyword>
<keyword id="KW-1003">Cell membrane</keyword>
<keyword id="KW-0175">Coiled coil</keyword>
<keyword id="KW-0472">Membrane</keyword>
<keyword id="KW-0717">Septation</keyword>
<keyword id="KW-0812">Transmembrane</keyword>
<keyword id="KW-1133">Transmembrane helix</keyword>
<organism>
    <name type="scientific">Listeria monocytogenes serotype 4a (strain HCC23)</name>
    <dbReference type="NCBI Taxonomy" id="552536"/>
    <lineage>
        <taxon>Bacteria</taxon>
        <taxon>Bacillati</taxon>
        <taxon>Bacillota</taxon>
        <taxon>Bacilli</taxon>
        <taxon>Bacillales</taxon>
        <taxon>Listeriaceae</taxon>
        <taxon>Listeria</taxon>
    </lineage>
</organism>
<dbReference type="EMBL" id="CP001175">
    <property type="protein sequence ID" value="ACK39316.1"/>
    <property type="molecule type" value="Genomic_DNA"/>
</dbReference>
<dbReference type="RefSeq" id="WP_003736737.1">
    <property type="nucleotide sequence ID" value="NC_011660.1"/>
</dbReference>
<dbReference type="SMR" id="B8DHE7"/>
<dbReference type="KEGG" id="lmh:LMHCC_0968"/>
<dbReference type="HOGENOM" id="CLU_034079_2_0_9"/>
<dbReference type="GO" id="GO:0005886">
    <property type="term" value="C:plasma membrane"/>
    <property type="evidence" value="ECO:0007669"/>
    <property type="project" value="UniProtKB-SubCell"/>
</dbReference>
<dbReference type="GO" id="GO:0005940">
    <property type="term" value="C:septin ring"/>
    <property type="evidence" value="ECO:0007669"/>
    <property type="project" value="InterPro"/>
</dbReference>
<dbReference type="GO" id="GO:0000917">
    <property type="term" value="P:division septum assembly"/>
    <property type="evidence" value="ECO:0007669"/>
    <property type="project" value="UniProtKB-KW"/>
</dbReference>
<dbReference type="GO" id="GO:0000921">
    <property type="term" value="P:septin ring assembly"/>
    <property type="evidence" value="ECO:0007669"/>
    <property type="project" value="InterPro"/>
</dbReference>
<dbReference type="HAMAP" id="MF_00728">
    <property type="entry name" value="EzrA"/>
    <property type="match status" value="1"/>
</dbReference>
<dbReference type="InterPro" id="IPR010379">
    <property type="entry name" value="EzrA"/>
</dbReference>
<dbReference type="NCBIfam" id="NF003408">
    <property type="entry name" value="PRK04778.1-2"/>
    <property type="match status" value="1"/>
</dbReference>
<dbReference type="Pfam" id="PF06160">
    <property type="entry name" value="EzrA"/>
    <property type="match status" value="1"/>
</dbReference>
<sequence length="571" mass="66477">MYYMLIGFIIVVIAVIGAGYILKRKHYQRINELEEKKIKLRERPVIDELSKVKKLKLTGQTEALFESWRSSWDEIETRLFPDLEEVLLEAEMNTDRYKFRSATNAENDIEQMLVVIEKQMDQILGGLKELLISEEKNAKESRATKEKFAELRREVLTRGFKLGETLPYVEAKLNELSESLNSYDSLTDQGDHLEAREIVIVVQKEMQVIEAQMERIPSLLHETDTILPEEMNKLRAGYEEMVRKGYYLAQMELDKEISRMKNQIDKMKKNVINLDLDEAEQGVEELHNEIDLFYDTLEHEAEARHFVKENHSPTSDKLQRQNAVSDALAEQITEVKQTYHVAEDDLAVYLKTSAKLSEAKENFEQLTTLIASGEIAYSAAQDTLKEIDAALITISAEQDKFAEELRSLRKDELEARDDAERMRRAIITLDRKMERERLPGLPEEYLSLREHMGESIDTLEKRLEEKPLNMKAVSQDWRIAEEDLIHLTEKAEEMMENVRLVEHVIQYANRYRLRNKELADELVQAENHFYNDYQYKKALEIAVTALEKVETGAFKKVEKAYASKVSVDDIE</sequence>
<reference key="1">
    <citation type="journal article" date="2011" name="J. Bacteriol.">
        <title>Genome sequence of lineage III Listeria monocytogenes strain HCC23.</title>
        <authorList>
            <person name="Steele C.L."/>
            <person name="Donaldson J.R."/>
            <person name="Paul D."/>
            <person name="Banes M.M."/>
            <person name="Arick T."/>
            <person name="Bridges S.M."/>
            <person name="Lawrence M.L."/>
        </authorList>
    </citation>
    <scope>NUCLEOTIDE SEQUENCE [LARGE SCALE GENOMIC DNA]</scope>
    <source>
        <strain>HCC23</strain>
    </source>
</reference>
<evidence type="ECO:0000255" key="1">
    <source>
        <dbReference type="HAMAP-Rule" id="MF_00728"/>
    </source>
</evidence>